<organism>
    <name type="scientific">Natronomonas pharaonis (strain ATCC 35678 / DSM 2160 / CIP 103997 / JCM 8858 / NBRC 14720 / NCIMB 2260 / Gabara)</name>
    <name type="common">Halobacterium pharaonis</name>
    <dbReference type="NCBI Taxonomy" id="348780"/>
    <lineage>
        <taxon>Archaea</taxon>
        <taxon>Methanobacteriati</taxon>
        <taxon>Methanobacteriota</taxon>
        <taxon>Stenosarchaea group</taxon>
        <taxon>Halobacteria</taxon>
        <taxon>Halobacteriales</taxon>
        <taxon>Haloarculaceae</taxon>
        <taxon>Natronomonas</taxon>
    </lineage>
</organism>
<sequence length="109" mass="12549">MNLTPKERERLTIFMAAELARRRKERGVKLNHPETVAYISDWACERAREGMSVAEIRQEATALLTREDVMDGVPELVDMVQVEPMFPDGTKLVTIHDPIRADTREQLEE</sequence>
<gene>
    <name evidence="1" type="primary">ureA</name>
    <name type="ordered locus">NP_2012A</name>
</gene>
<name>URE3_NATPD</name>
<keyword id="KW-0963">Cytoplasm</keyword>
<keyword id="KW-0378">Hydrolase</keyword>
<keyword id="KW-1185">Reference proteome</keyword>
<comment type="catalytic activity">
    <reaction evidence="1">
        <text>urea + 2 H2O + H(+) = hydrogencarbonate + 2 NH4(+)</text>
        <dbReference type="Rhea" id="RHEA:20557"/>
        <dbReference type="ChEBI" id="CHEBI:15377"/>
        <dbReference type="ChEBI" id="CHEBI:15378"/>
        <dbReference type="ChEBI" id="CHEBI:16199"/>
        <dbReference type="ChEBI" id="CHEBI:17544"/>
        <dbReference type="ChEBI" id="CHEBI:28938"/>
        <dbReference type="EC" id="3.5.1.5"/>
    </reaction>
</comment>
<comment type="pathway">
    <text evidence="1">Nitrogen metabolism; urea degradation; CO(2) and NH(3) from urea (urease route): step 1/1.</text>
</comment>
<comment type="subunit">
    <text evidence="1">Heterotrimer of UreA (gamma), UreB (beta) and UreC (alpha) subunits. Three heterotrimers associate to form the active enzyme.</text>
</comment>
<comment type="subcellular location">
    <subcellularLocation>
        <location evidence="1">Cytoplasm</location>
    </subcellularLocation>
</comment>
<comment type="similarity">
    <text evidence="1">Belongs to the urease gamma subunit family.</text>
</comment>
<feature type="chain" id="PRO_0000234221" description="Urease subunit gamma">
    <location>
        <begin position="1"/>
        <end position="109"/>
    </location>
</feature>
<proteinExistence type="inferred from homology"/>
<evidence type="ECO:0000255" key="1">
    <source>
        <dbReference type="HAMAP-Rule" id="MF_00739"/>
    </source>
</evidence>
<reference key="1">
    <citation type="journal article" date="2005" name="Genome Res.">
        <title>Living with two extremes: conclusions from the genome sequence of Natronomonas pharaonis.</title>
        <authorList>
            <person name="Falb M."/>
            <person name="Pfeiffer F."/>
            <person name="Palm P."/>
            <person name="Rodewald K."/>
            <person name="Hickmann V."/>
            <person name="Tittor J."/>
            <person name="Oesterhelt D."/>
        </authorList>
    </citation>
    <scope>NUCLEOTIDE SEQUENCE [LARGE SCALE GENOMIC DNA]</scope>
    <source>
        <strain>ATCC 35678 / DSM 2160 / CIP 103997 / JCM 8858 / NBRC 14720 / NCIMB 2260 / Gabara</strain>
    </source>
</reference>
<accession>Q3IRZ4</accession>
<protein>
    <recommendedName>
        <fullName evidence="1">Urease subunit gamma</fullName>
        <ecNumber evidence="1">3.5.1.5</ecNumber>
    </recommendedName>
    <alternativeName>
        <fullName evidence="1">Urea amidohydrolase subunit gamma</fullName>
    </alternativeName>
</protein>
<dbReference type="EC" id="3.5.1.5" evidence="1"/>
<dbReference type="EMBL" id="CR936257">
    <property type="protein sequence ID" value="CAI49097.1"/>
    <property type="molecule type" value="Genomic_DNA"/>
</dbReference>
<dbReference type="RefSeq" id="WP_011322726.1">
    <property type="nucleotide sequence ID" value="NC_007426.1"/>
</dbReference>
<dbReference type="SMR" id="Q3IRZ4"/>
<dbReference type="STRING" id="348780.NP_2012A"/>
<dbReference type="EnsemblBacteria" id="CAI49097">
    <property type="protein sequence ID" value="CAI49097"/>
    <property type="gene ID" value="NP_2012A"/>
</dbReference>
<dbReference type="GeneID" id="3703450"/>
<dbReference type="KEGG" id="nph:NP_2012A"/>
<dbReference type="eggNOG" id="arCOG04528">
    <property type="taxonomic scope" value="Archaea"/>
</dbReference>
<dbReference type="HOGENOM" id="CLU_145825_1_0_2"/>
<dbReference type="OrthoDB" id="42431at2157"/>
<dbReference type="UniPathway" id="UPA00258">
    <property type="reaction ID" value="UER00370"/>
</dbReference>
<dbReference type="Proteomes" id="UP000002698">
    <property type="component" value="Chromosome"/>
</dbReference>
<dbReference type="GO" id="GO:0005737">
    <property type="term" value="C:cytoplasm"/>
    <property type="evidence" value="ECO:0007669"/>
    <property type="project" value="UniProtKB-SubCell"/>
</dbReference>
<dbReference type="GO" id="GO:0016151">
    <property type="term" value="F:nickel cation binding"/>
    <property type="evidence" value="ECO:0007669"/>
    <property type="project" value="InterPro"/>
</dbReference>
<dbReference type="GO" id="GO:0009039">
    <property type="term" value="F:urease activity"/>
    <property type="evidence" value="ECO:0007669"/>
    <property type="project" value="UniProtKB-UniRule"/>
</dbReference>
<dbReference type="GO" id="GO:0043419">
    <property type="term" value="P:urea catabolic process"/>
    <property type="evidence" value="ECO:0007669"/>
    <property type="project" value="UniProtKB-UniRule"/>
</dbReference>
<dbReference type="CDD" id="cd00390">
    <property type="entry name" value="Urease_gamma"/>
    <property type="match status" value="1"/>
</dbReference>
<dbReference type="Gene3D" id="3.30.280.10">
    <property type="entry name" value="Urease, gamma-like subunit"/>
    <property type="match status" value="1"/>
</dbReference>
<dbReference type="HAMAP" id="MF_00739">
    <property type="entry name" value="Urease_gamma"/>
    <property type="match status" value="1"/>
</dbReference>
<dbReference type="InterPro" id="IPR012010">
    <property type="entry name" value="Urease_gamma"/>
</dbReference>
<dbReference type="InterPro" id="IPR002026">
    <property type="entry name" value="Urease_gamma/gamma-beta_su"/>
</dbReference>
<dbReference type="InterPro" id="IPR036463">
    <property type="entry name" value="Urease_gamma_sf"/>
</dbReference>
<dbReference type="InterPro" id="IPR050069">
    <property type="entry name" value="Urease_subunit"/>
</dbReference>
<dbReference type="NCBIfam" id="NF009712">
    <property type="entry name" value="PRK13241.1"/>
    <property type="match status" value="1"/>
</dbReference>
<dbReference type="NCBIfam" id="TIGR00193">
    <property type="entry name" value="urease_gam"/>
    <property type="match status" value="1"/>
</dbReference>
<dbReference type="PANTHER" id="PTHR33569">
    <property type="entry name" value="UREASE"/>
    <property type="match status" value="1"/>
</dbReference>
<dbReference type="PANTHER" id="PTHR33569:SF1">
    <property type="entry name" value="UREASE"/>
    <property type="match status" value="1"/>
</dbReference>
<dbReference type="Pfam" id="PF00547">
    <property type="entry name" value="Urease_gamma"/>
    <property type="match status" value="1"/>
</dbReference>
<dbReference type="PIRSF" id="PIRSF001223">
    <property type="entry name" value="Urease_gamma"/>
    <property type="match status" value="1"/>
</dbReference>
<dbReference type="SUPFAM" id="SSF54111">
    <property type="entry name" value="Urease, gamma-subunit"/>
    <property type="match status" value="1"/>
</dbReference>